<feature type="signal peptide" evidence="1">
    <location>
        <begin position="1"/>
        <end position="22"/>
    </location>
</feature>
<feature type="propeptide" id="PRO_0000274098" evidence="4">
    <location>
        <begin position="23"/>
        <end position="48"/>
    </location>
</feature>
<feature type="peptide" id="PRO_0000274099" description="Conotoxin TeAr193" evidence="2">
    <location>
        <begin position="51"/>
        <end position="62"/>
    </location>
</feature>
<feature type="sequence conflict" description="In Ref. 1; AAG60387." evidence="4" ref="1">
    <original>TK</original>
    <variation>PS</variation>
    <location>
        <begin position="62"/>
        <end position="63"/>
    </location>
</feature>
<comment type="subcellular location">
    <subcellularLocation>
        <location evidence="2">Secreted</location>
    </subcellularLocation>
</comment>
<comment type="tissue specificity">
    <text evidence="5">Expressed by the venom duct.</text>
</comment>
<comment type="domain">
    <text evidence="4">The cysteine framework is V (CC-CC).</text>
</comment>
<comment type="PTM">
    <text evidence="4">Contains 2 disulfide bonds that can be either 'C1-C3, C2-C4' or 'C1-C4, C2-C3', since these disulfide connectivities have been observed for conotoxins with cysteine framework V (for examples, see AC P0DQQ7 and AC P81755).</text>
</comment>
<comment type="similarity">
    <text evidence="4">Belongs to the conotoxin T superfamily.</text>
</comment>
<sequence length="63" mass="7137">MRCLPVFVILLLLIASAPSVDAQPKTKDDIPQASFLDNAKRYLQVLESKRNCCRRQICCGRTK</sequence>
<keyword id="KW-0165">Cleavage on pair of basic residues</keyword>
<keyword id="KW-1015">Disulfide bond</keyword>
<keyword id="KW-0528">Neurotoxin</keyword>
<keyword id="KW-0964">Secreted</keyword>
<keyword id="KW-0732">Signal</keyword>
<keyword id="KW-0800">Toxin</keyword>
<dbReference type="EMBL" id="AF214959">
    <property type="protein sequence ID" value="AAG60387.1"/>
    <property type="molecule type" value="mRNA"/>
</dbReference>
<dbReference type="EMBL" id="DQ141141">
    <property type="protein sequence ID" value="AAZ85406.1"/>
    <property type="molecule type" value="mRNA"/>
</dbReference>
<dbReference type="SMR" id="Q3YEH2"/>
<dbReference type="ConoServer" id="1678">
    <property type="toxin name" value="Conorphin-T precursor"/>
</dbReference>
<dbReference type="ConoServer" id="646">
    <property type="toxin name" value="Conorphin-T precursor"/>
</dbReference>
<dbReference type="GO" id="GO:0005576">
    <property type="term" value="C:extracellular region"/>
    <property type="evidence" value="ECO:0007669"/>
    <property type="project" value="UniProtKB-SubCell"/>
</dbReference>
<dbReference type="GO" id="GO:0090729">
    <property type="term" value="F:toxin activity"/>
    <property type="evidence" value="ECO:0007669"/>
    <property type="project" value="UniProtKB-KW"/>
</dbReference>
<dbReference type="InterPro" id="IPR031565">
    <property type="entry name" value="T-conotoxin"/>
</dbReference>
<dbReference type="Pfam" id="PF16981">
    <property type="entry name" value="Chi-conotoxin"/>
    <property type="match status" value="1"/>
</dbReference>
<protein>
    <recommendedName>
        <fullName evidence="3 7">Conotoxin TeAr193</fullName>
    </recommendedName>
    <alternativeName>
        <fullName evidence="6">Conotoxin TxMRCL-03</fullName>
    </alternativeName>
</protein>
<organism>
    <name type="scientific">Conus textile</name>
    <name type="common">Cloth-of-gold cone</name>
    <dbReference type="NCBI Taxonomy" id="6494"/>
    <lineage>
        <taxon>Eukaryota</taxon>
        <taxon>Metazoa</taxon>
        <taxon>Spiralia</taxon>
        <taxon>Lophotrochozoa</taxon>
        <taxon>Mollusca</taxon>
        <taxon>Gastropoda</taxon>
        <taxon>Caenogastropoda</taxon>
        <taxon>Neogastropoda</taxon>
        <taxon>Conoidea</taxon>
        <taxon>Conidae</taxon>
        <taxon>Conus</taxon>
        <taxon>Cylinder</taxon>
    </lineage>
</organism>
<reference key="1">
    <citation type="journal article" date="2001" name="Mol. Biol. Evol.">
        <title>Mechanisms for evolving hypervariability: the case of conopeptides.</title>
        <authorList>
            <person name="Conticello S.G."/>
            <person name="Gilad Y."/>
            <person name="Avidan N."/>
            <person name="Ben-Asher E."/>
            <person name="Levy Z."/>
            <person name="Fainzilber M."/>
        </authorList>
    </citation>
    <scope>NUCLEOTIDE SEQUENCE [MRNA]</scope>
</reference>
<reference key="2">
    <citation type="journal article" date="2006" name="Peptides">
        <title>Direct cDNA cloning of novel conotoxins of the T-superfamily from Conus textile.</title>
        <authorList>
            <person name="Luo S."/>
            <person name="Zhangsun D."/>
            <person name="Zhang B."/>
            <person name="Chen X."/>
            <person name="Feng J."/>
        </authorList>
    </citation>
    <scope>NUCLEOTIDE SEQUENCE [MRNA]</scope>
    <source>
        <tissue>Venom duct</tissue>
    </source>
</reference>
<reference key="3">
    <citation type="journal article" date="2012" name="J. Proteome Res.">
        <title>Constrained de novo sequencing of conotoxins.</title>
        <authorList>
            <person name="Bhatia S."/>
            <person name="Kil Y.J."/>
            <person name="Ueberheide B."/>
            <person name="Chait B.T."/>
            <person name="Tayo L."/>
            <person name="Cruz L."/>
            <person name="Lu B."/>
            <person name="Yates J.R. III"/>
            <person name="Bern M."/>
        </authorList>
    </citation>
    <scope>IDENTIFICATION BY MASS SPECTROMETRY</scope>
    <scope>SUBCELLULAR LOCATION</scope>
    <source>
        <tissue>Venom</tissue>
    </source>
</reference>
<name>CT593_CONTE</name>
<accession>Q3YEH2</accession>
<accession>Q9BPG9</accession>
<evidence type="ECO:0000255" key="1"/>
<evidence type="ECO:0000269" key="2">
    <source>
    </source>
</evidence>
<evidence type="ECO:0000303" key="3">
    <source>
    </source>
</evidence>
<evidence type="ECO:0000305" key="4"/>
<evidence type="ECO:0000305" key="5">
    <source>
    </source>
</evidence>
<evidence type="ECO:0000312" key="6">
    <source>
        <dbReference type="EMBL" id="AAG60387.1"/>
    </source>
</evidence>
<evidence type="ECO:0000312" key="7">
    <source>
        <dbReference type="EMBL" id="AAZ85406.1"/>
    </source>
</evidence>
<proteinExistence type="evidence at protein level"/>